<evidence type="ECO:0000255" key="1">
    <source>
        <dbReference type="HAMAP-Rule" id="MF_01320"/>
    </source>
</evidence>
<evidence type="ECO:0000256" key="2">
    <source>
        <dbReference type="SAM" id="MobiDB-lite"/>
    </source>
</evidence>
<evidence type="ECO:0000305" key="3"/>
<reference key="1">
    <citation type="journal article" date="2008" name="PLoS Genet.">
        <title>The genome of Borrelia recurrentis, the agent of deadly louse-borne relapsing fever, is a degraded subset of tick-borne Borrelia duttonii.</title>
        <authorList>
            <person name="Lescot M."/>
            <person name="Audic S."/>
            <person name="Robert C."/>
            <person name="Nguyen T.T."/>
            <person name="Blanc G."/>
            <person name="Cutler S.J."/>
            <person name="Wincker P."/>
            <person name="Couloux A."/>
            <person name="Claverie J.-M."/>
            <person name="Raoult D."/>
            <person name="Drancourt M."/>
        </authorList>
    </citation>
    <scope>NUCLEOTIDE SEQUENCE [LARGE SCALE GENOMIC DNA]</scope>
    <source>
        <strain>Ly</strain>
    </source>
</reference>
<gene>
    <name evidence="1" type="primary">rplB</name>
    <name type="ordered locus">BDU_484</name>
</gene>
<comment type="function">
    <text evidence="1">One of the primary rRNA binding proteins. Required for association of the 30S and 50S subunits to form the 70S ribosome, for tRNA binding and peptide bond formation. It has been suggested to have peptidyltransferase activity; this is somewhat controversial. Makes several contacts with the 16S rRNA in the 70S ribosome.</text>
</comment>
<comment type="subunit">
    <text evidence="1">Part of the 50S ribosomal subunit. Forms a bridge to the 30S subunit in the 70S ribosome.</text>
</comment>
<comment type="similarity">
    <text evidence="1">Belongs to the universal ribosomal protein uL2 family.</text>
</comment>
<organism>
    <name type="scientific">Borrelia duttonii (strain Ly)</name>
    <dbReference type="NCBI Taxonomy" id="412419"/>
    <lineage>
        <taxon>Bacteria</taxon>
        <taxon>Pseudomonadati</taxon>
        <taxon>Spirochaetota</taxon>
        <taxon>Spirochaetia</taxon>
        <taxon>Spirochaetales</taxon>
        <taxon>Borreliaceae</taxon>
        <taxon>Borrelia</taxon>
    </lineage>
</organism>
<accession>B5RM39</accession>
<dbReference type="EMBL" id="CP000976">
    <property type="protein sequence ID" value="ACH93425.1"/>
    <property type="molecule type" value="Genomic_DNA"/>
</dbReference>
<dbReference type="RefSeq" id="WP_012538235.1">
    <property type="nucleotide sequence ID" value="NC_011229.1"/>
</dbReference>
<dbReference type="SMR" id="B5RM39"/>
<dbReference type="STRING" id="412419.BDU_484"/>
<dbReference type="KEGG" id="bdu:BDU_484"/>
<dbReference type="eggNOG" id="COG0090">
    <property type="taxonomic scope" value="Bacteria"/>
</dbReference>
<dbReference type="HOGENOM" id="CLU_036235_2_1_12"/>
<dbReference type="OrthoDB" id="9778722at2"/>
<dbReference type="Proteomes" id="UP000000611">
    <property type="component" value="Chromosome"/>
</dbReference>
<dbReference type="GO" id="GO:0015934">
    <property type="term" value="C:large ribosomal subunit"/>
    <property type="evidence" value="ECO:0007669"/>
    <property type="project" value="InterPro"/>
</dbReference>
<dbReference type="GO" id="GO:0019843">
    <property type="term" value="F:rRNA binding"/>
    <property type="evidence" value="ECO:0007669"/>
    <property type="project" value="UniProtKB-UniRule"/>
</dbReference>
<dbReference type="GO" id="GO:0003735">
    <property type="term" value="F:structural constituent of ribosome"/>
    <property type="evidence" value="ECO:0007669"/>
    <property type="project" value="InterPro"/>
</dbReference>
<dbReference type="GO" id="GO:0016740">
    <property type="term" value="F:transferase activity"/>
    <property type="evidence" value="ECO:0007669"/>
    <property type="project" value="InterPro"/>
</dbReference>
<dbReference type="GO" id="GO:0002181">
    <property type="term" value="P:cytoplasmic translation"/>
    <property type="evidence" value="ECO:0007669"/>
    <property type="project" value="TreeGrafter"/>
</dbReference>
<dbReference type="FunFam" id="2.30.30.30:FF:000001">
    <property type="entry name" value="50S ribosomal protein L2"/>
    <property type="match status" value="1"/>
</dbReference>
<dbReference type="FunFam" id="4.10.950.10:FF:000001">
    <property type="entry name" value="50S ribosomal protein L2"/>
    <property type="match status" value="1"/>
</dbReference>
<dbReference type="Gene3D" id="2.30.30.30">
    <property type="match status" value="1"/>
</dbReference>
<dbReference type="Gene3D" id="2.40.50.140">
    <property type="entry name" value="Nucleic acid-binding proteins"/>
    <property type="match status" value="1"/>
</dbReference>
<dbReference type="Gene3D" id="4.10.950.10">
    <property type="entry name" value="Ribosomal protein L2, domain 3"/>
    <property type="match status" value="1"/>
</dbReference>
<dbReference type="HAMAP" id="MF_01320_B">
    <property type="entry name" value="Ribosomal_uL2_B"/>
    <property type="match status" value="1"/>
</dbReference>
<dbReference type="InterPro" id="IPR012340">
    <property type="entry name" value="NA-bd_OB-fold"/>
</dbReference>
<dbReference type="InterPro" id="IPR014722">
    <property type="entry name" value="Rib_uL2_dom2"/>
</dbReference>
<dbReference type="InterPro" id="IPR002171">
    <property type="entry name" value="Ribosomal_uL2"/>
</dbReference>
<dbReference type="InterPro" id="IPR005880">
    <property type="entry name" value="Ribosomal_uL2_bac/org-type"/>
</dbReference>
<dbReference type="InterPro" id="IPR022669">
    <property type="entry name" value="Ribosomal_uL2_C"/>
</dbReference>
<dbReference type="InterPro" id="IPR022671">
    <property type="entry name" value="Ribosomal_uL2_CS"/>
</dbReference>
<dbReference type="InterPro" id="IPR014726">
    <property type="entry name" value="Ribosomal_uL2_dom3"/>
</dbReference>
<dbReference type="InterPro" id="IPR022666">
    <property type="entry name" value="Ribosomal_uL2_RNA-bd_dom"/>
</dbReference>
<dbReference type="InterPro" id="IPR008991">
    <property type="entry name" value="Translation_prot_SH3-like_sf"/>
</dbReference>
<dbReference type="NCBIfam" id="TIGR01171">
    <property type="entry name" value="rplB_bact"/>
    <property type="match status" value="1"/>
</dbReference>
<dbReference type="PANTHER" id="PTHR13691:SF5">
    <property type="entry name" value="LARGE RIBOSOMAL SUBUNIT PROTEIN UL2M"/>
    <property type="match status" value="1"/>
</dbReference>
<dbReference type="PANTHER" id="PTHR13691">
    <property type="entry name" value="RIBOSOMAL PROTEIN L2"/>
    <property type="match status" value="1"/>
</dbReference>
<dbReference type="Pfam" id="PF00181">
    <property type="entry name" value="Ribosomal_L2"/>
    <property type="match status" value="1"/>
</dbReference>
<dbReference type="Pfam" id="PF03947">
    <property type="entry name" value="Ribosomal_L2_C"/>
    <property type="match status" value="1"/>
</dbReference>
<dbReference type="PIRSF" id="PIRSF002158">
    <property type="entry name" value="Ribosomal_L2"/>
    <property type="match status" value="1"/>
</dbReference>
<dbReference type="SMART" id="SM01383">
    <property type="entry name" value="Ribosomal_L2"/>
    <property type="match status" value="1"/>
</dbReference>
<dbReference type="SMART" id="SM01382">
    <property type="entry name" value="Ribosomal_L2_C"/>
    <property type="match status" value="1"/>
</dbReference>
<dbReference type="SUPFAM" id="SSF50249">
    <property type="entry name" value="Nucleic acid-binding proteins"/>
    <property type="match status" value="1"/>
</dbReference>
<dbReference type="SUPFAM" id="SSF50104">
    <property type="entry name" value="Translation proteins SH3-like domain"/>
    <property type="match status" value="1"/>
</dbReference>
<dbReference type="PROSITE" id="PS00467">
    <property type="entry name" value="RIBOSOMAL_L2"/>
    <property type="match status" value="1"/>
</dbReference>
<feature type="chain" id="PRO_1000141511" description="Large ribosomal subunit protein uL2">
    <location>
        <begin position="1"/>
        <end position="277"/>
    </location>
</feature>
<feature type="region of interest" description="Disordered" evidence="2">
    <location>
        <begin position="32"/>
        <end position="58"/>
    </location>
</feature>
<feature type="region of interest" description="Disordered" evidence="2">
    <location>
        <begin position="225"/>
        <end position="277"/>
    </location>
</feature>
<name>RL2_BORDL</name>
<protein>
    <recommendedName>
        <fullName evidence="1">Large ribosomal subunit protein uL2</fullName>
    </recommendedName>
    <alternativeName>
        <fullName evidence="3">50S ribosomal protein L2</fullName>
    </alternativeName>
</protein>
<proteinExistence type="inferred from homology"/>
<keyword id="KW-0687">Ribonucleoprotein</keyword>
<keyword id="KW-0689">Ribosomal protein</keyword>
<keyword id="KW-0694">RNA-binding</keyword>
<keyword id="KW-0699">rRNA-binding</keyword>
<sequence length="277" mass="30454">MGIKTYRPKTSSLRYKTTLSFDELSKGNDPLKSLTKGKVSRAGRDSSGRISVRRRGGGHKRRYREIDFARRDKFGIPARVAAIEYDPNRSPNIALLVYRDGDKRYIIAPKGVKVGDILESGPNAPIKIGNALPLENIPVGKMVHNIELNIGKGGQLVRGAGGYAMIIASDGDYVTVKLPSGEMRMIFKKCIATLGEVGNEDYMNVSIGKAGKSRWLGRRPKVRGVAMNPIDHPHGGGEGKTSGGRHPVSPWGQPAKGYKTRKKNKYSDKFIVKRRNN</sequence>